<protein>
    <recommendedName>
        <fullName>Putative pumilio homolog 13</fullName>
        <shortName>APUM-13</shortName>
        <shortName>AtPUM13</shortName>
    </recommendedName>
</protein>
<keyword id="KW-0963">Cytoplasm</keyword>
<keyword id="KW-1185">Reference proteome</keyword>
<keyword id="KW-0677">Repeat</keyword>
<keyword id="KW-0694">RNA-binding</keyword>
<keyword id="KW-0810">Translation regulation</keyword>
<dbReference type="EMBL" id="AB008267">
    <property type="protein sequence ID" value="BAB08273.1"/>
    <property type="molecule type" value="Genomic_DNA"/>
</dbReference>
<dbReference type="EMBL" id="CP002688">
    <property type="protein sequence ID" value="AED94909.1"/>
    <property type="molecule type" value="Genomic_DNA"/>
</dbReference>
<dbReference type="RefSeq" id="NP_199123.1">
    <property type="nucleotide sequence ID" value="NM_123675.2"/>
</dbReference>
<dbReference type="SMR" id="Q9FMH4"/>
<dbReference type="STRING" id="3702.Q9FMH4"/>
<dbReference type="PaxDb" id="3702-AT5G43090.1"/>
<dbReference type="EnsemblPlants" id="AT5G43090.1">
    <property type="protein sequence ID" value="AT5G43090.1"/>
    <property type="gene ID" value="AT5G43090"/>
</dbReference>
<dbReference type="GeneID" id="834325"/>
<dbReference type="Gramene" id="AT5G43090.1">
    <property type="protein sequence ID" value="AT5G43090.1"/>
    <property type="gene ID" value="AT5G43090"/>
</dbReference>
<dbReference type="KEGG" id="ath:AT5G43090"/>
<dbReference type="Araport" id="AT5G43090"/>
<dbReference type="TAIR" id="AT5G43090">
    <property type="gene designation" value="PUM13"/>
</dbReference>
<dbReference type="eggNOG" id="KOG2049">
    <property type="taxonomic scope" value="Eukaryota"/>
</dbReference>
<dbReference type="HOGENOM" id="CLU_533583_0_0_1"/>
<dbReference type="InParanoid" id="Q9FMH4"/>
<dbReference type="OMA" id="PFLENRW"/>
<dbReference type="PhylomeDB" id="Q9FMH4"/>
<dbReference type="PRO" id="PR:Q9FMH4"/>
<dbReference type="Proteomes" id="UP000006548">
    <property type="component" value="Chromosome 5"/>
</dbReference>
<dbReference type="ExpressionAtlas" id="Q9FMH4">
    <property type="expression patterns" value="baseline and differential"/>
</dbReference>
<dbReference type="GO" id="GO:0005737">
    <property type="term" value="C:cytoplasm"/>
    <property type="evidence" value="ECO:0007669"/>
    <property type="project" value="UniProtKB-SubCell"/>
</dbReference>
<dbReference type="GO" id="GO:0003723">
    <property type="term" value="F:RNA binding"/>
    <property type="evidence" value="ECO:0007669"/>
    <property type="project" value="UniProtKB-KW"/>
</dbReference>
<dbReference type="GO" id="GO:0006417">
    <property type="term" value="P:regulation of translation"/>
    <property type="evidence" value="ECO:0007669"/>
    <property type="project" value="UniProtKB-KW"/>
</dbReference>
<dbReference type="CDD" id="cd07920">
    <property type="entry name" value="Pumilio"/>
    <property type="match status" value="1"/>
</dbReference>
<dbReference type="Gene3D" id="1.25.10.10">
    <property type="entry name" value="Leucine-rich Repeat Variant"/>
    <property type="match status" value="1"/>
</dbReference>
<dbReference type="InterPro" id="IPR011989">
    <property type="entry name" value="ARM-like"/>
</dbReference>
<dbReference type="InterPro" id="IPR016024">
    <property type="entry name" value="ARM-type_fold"/>
</dbReference>
<dbReference type="InterPro" id="IPR033133">
    <property type="entry name" value="PUM-HD"/>
</dbReference>
<dbReference type="InterPro" id="IPR033712">
    <property type="entry name" value="Pumilio_RNA-bd"/>
</dbReference>
<dbReference type="InterPro" id="IPR001313">
    <property type="entry name" value="Pumilio_RNA-bd_rpt"/>
</dbReference>
<dbReference type="PANTHER" id="PTHR12537:SF186">
    <property type="entry name" value="PUMILIO HOMOLOG 14-RELATED"/>
    <property type="match status" value="1"/>
</dbReference>
<dbReference type="PANTHER" id="PTHR12537">
    <property type="entry name" value="RNA BINDING PROTEIN PUMILIO-RELATED"/>
    <property type="match status" value="1"/>
</dbReference>
<dbReference type="Pfam" id="PF00806">
    <property type="entry name" value="PUF"/>
    <property type="match status" value="1"/>
</dbReference>
<dbReference type="Pfam" id="PF22493">
    <property type="entry name" value="PUF_NOP9"/>
    <property type="match status" value="1"/>
</dbReference>
<dbReference type="SMART" id="SM00025">
    <property type="entry name" value="Pumilio"/>
    <property type="match status" value="6"/>
</dbReference>
<dbReference type="SUPFAM" id="SSF48371">
    <property type="entry name" value="ARM repeat"/>
    <property type="match status" value="1"/>
</dbReference>
<dbReference type="PROSITE" id="PS50302">
    <property type="entry name" value="PUM"/>
    <property type="match status" value="8"/>
</dbReference>
<dbReference type="PROSITE" id="PS50303">
    <property type="entry name" value="PUM_HD"/>
    <property type="match status" value="1"/>
</dbReference>
<sequence>MDNKFYVNTNGERNIWSTAAEENMTTAASSSQSQPPQMQSSKFHQPENHIHINDGFSSGAFDLQTLESSFRGLSFADSNVHQNGNPILPAHQYNQVFNGGGGSYGDGYLFPPSGSYHHYELKDLQRFNQNQQRLSYQNDYVNQSYRYDTIGGGNGMLNNSFLNGVPCASRNNVSDYYTNIFGYGVNNSWRSNEGCTYNQDQAASSMENGRGSYFSIATDRVWSKELEKTIFVGTKETIDMIFDGLIVGICELMVDPFGNDVVKLLIGKCSSEQIILIVDVVTRHISKFVNICFNPIGTLAIQVLLTSIHERANNQIPRIMDAISSVALQLTRNTNAKYVILACFRMFTSSQCRRLLEVVSQHCYQIAIDQNGCCLLQQCFDKERVPNHEIRQRLISEVIEHALKLCLNCHGNYVVQYVVELDNQHETDLLVNKLLRNYAHLARNKYGSHVVQKLLKLRGIDSKLIVVDLLRGIDTLLLDPFGNYVIQTAWFVSKEDVRQMLRYYIERNIRLMRCNKFGNKILEKLNI</sequence>
<feature type="chain" id="PRO_0000401395" description="Putative pumilio homolog 13">
    <location>
        <begin position="1"/>
        <end position="527"/>
    </location>
</feature>
<feature type="domain" description="PUM-HD" evidence="2">
    <location>
        <begin position="184"/>
        <end position="527"/>
    </location>
</feature>
<feature type="repeat" description="Pumilio 1">
    <location>
        <begin position="205"/>
        <end position="243"/>
    </location>
</feature>
<feature type="repeat" description="Pumilio 2">
    <location>
        <begin position="244"/>
        <end position="279"/>
    </location>
</feature>
<feature type="repeat" description="Pumilio 3">
    <location>
        <begin position="283"/>
        <end position="321"/>
    </location>
</feature>
<feature type="repeat" description="Pumilio 4">
    <location>
        <begin position="322"/>
        <end position="357"/>
    </location>
</feature>
<feature type="repeat" description="Pumilio 5">
    <location>
        <begin position="358"/>
        <end position="396"/>
    </location>
</feature>
<feature type="repeat" description="Pumilio 6">
    <location>
        <begin position="397"/>
        <end position="432"/>
    </location>
</feature>
<feature type="repeat" description="Pumilio 7">
    <location>
        <begin position="433"/>
        <end position="468"/>
    </location>
</feature>
<feature type="repeat" description="Pumilio 8">
    <location>
        <begin position="469"/>
        <end position="503"/>
    </location>
</feature>
<feature type="region of interest" description="Disordered" evidence="3">
    <location>
        <begin position="22"/>
        <end position="51"/>
    </location>
</feature>
<feature type="compositionally biased region" description="Low complexity" evidence="3">
    <location>
        <begin position="24"/>
        <end position="41"/>
    </location>
</feature>
<name>PUM13_ARATH</name>
<gene>
    <name type="primary">APUM13</name>
    <name type="ordered locus">At5g43090</name>
    <name type="ORF">MMG4.11</name>
</gene>
<proteinExistence type="inferred from homology"/>
<organism>
    <name type="scientific">Arabidopsis thaliana</name>
    <name type="common">Mouse-ear cress</name>
    <dbReference type="NCBI Taxonomy" id="3702"/>
    <lineage>
        <taxon>Eukaryota</taxon>
        <taxon>Viridiplantae</taxon>
        <taxon>Streptophyta</taxon>
        <taxon>Embryophyta</taxon>
        <taxon>Tracheophyta</taxon>
        <taxon>Spermatophyta</taxon>
        <taxon>Magnoliopsida</taxon>
        <taxon>eudicotyledons</taxon>
        <taxon>Gunneridae</taxon>
        <taxon>Pentapetalae</taxon>
        <taxon>rosids</taxon>
        <taxon>malvids</taxon>
        <taxon>Brassicales</taxon>
        <taxon>Brassicaceae</taxon>
        <taxon>Camelineae</taxon>
        <taxon>Arabidopsis</taxon>
    </lineage>
</organism>
<evidence type="ECO:0000250" key="1"/>
<evidence type="ECO:0000255" key="2">
    <source>
        <dbReference type="PROSITE-ProRule" id="PRU00318"/>
    </source>
</evidence>
<evidence type="ECO:0000256" key="3">
    <source>
        <dbReference type="SAM" id="MobiDB-lite"/>
    </source>
</evidence>
<evidence type="ECO:0000305" key="4"/>
<accession>Q9FMH4</accession>
<reference key="1">
    <citation type="journal article" date="1997" name="DNA Res.">
        <title>Structural analysis of Arabidopsis thaliana chromosome 5. III. Sequence features of the regions of 1,191,918 bp covered by seventeen physically assigned P1 clones.</title>
        <authorList>
            <person name="Nakamura Y."/>
            <person name="Sato S."/>
            <person name="Kaneko T."/>
            <person name="Kotani H."/>
            <person name="Asamizu E."/>
            <person name="Miyajima N."/>
            <person name="Tabata S."/>
        </authorList>
    </citation>
    <scope>NUCLEOTIDE SEQUENCE [LARGE SCALE GENOMIC DNA]</scope>
    <source>
        <strain>cv. Columbia</strain>
    </source>
</reference>
<reference key="2">
    <citation type="journal article" date="2017" name="Plant J.">
        <title>Araport11: a complete reannotation of the Arabidopsis thaliana reference genome.</title>
        <authorList>
            <person name="Cheng C.Y."/>
            <person name="Krishnakumar V."/>
            <person name="Chan A.P."/>
            <person name="Thibaud-Nissen F."/>
            <person name="Schobel S."/>
            <person name="Town C.D."/>
        </authorList>
    </citation>
    <scope>GENOME REANNOTATION</scope>
    <source>
        <strain>cv. Columbia</strain>
    </source>
</reference>
<reference key="3">
    <citation type="journal article" date="2009" name="FEBS J.">
        <title>Molecular characterization of Arabidopsis thaliana PUF proteins -- binding specificity and target candidates.</title>
        <authorList>
            <person name="Francischini C.W."/>
            <person name="Quaggio R.B."/>
        </authorList>
    </citation>
    <scope>GENE FAMILY</scope>
</reference>
<reference key="4">
    <citation type="journal article" date="2010" name="BMC Plant Biol.">
        <title>The Puf family of RNA-binding proteins in plants: phylogeny, structural modeling, activity and subcellular localization.</title>
        <authorList>
            <person name="Tam P.P."/>
            <person name="Barrette-Ng I.H."/>
            <person name="Simon D.M."/>
            <person name="Tam M.W."/>
            <person name="Ang A.L."/>
            <person name="Muench D.G."/>
        </authorList>
    </citation>
    <scope>GENE FAMILY</scope>
</reference>
<comment type="function">
    <text evidence="1">Sequence-specific RNA-binding protein that regulates translation and mRNA stability by binding the 3'-UTR of target mRNAs.</text>
</comment>
<comment type="subcellular location">
    <subcellularLocation>
        <location evidence="4">Cytoplasm</location>
    </subcellularLocation>
</comment>
<comment type="domain">
    <text evidence="1">The pumilio repeats mediate the association with RNA by packing together to form a right-handed superhelix that approximates a half donut. The number as well as the specific sequence of the repeats determine the specificity for target mRNAs (By similarity).</text>
</comment>